<evidence type="ECO:0000255" key="1">
    <source>
        <dbReference type="HAMAP-Rule" id="MF_00097"/>
    </source>
</evidence>
<reference key="1">
    <citation type="journal article" date="2003" name="Nucleic Acids Res.">
        <title>Genome sequence of Chlamydophila caviae (Chlamydia psittaci GPIC): examining the role of niche-specific genes in the evolution of the Chlamydiaceae.</title>
        <authorList>
            <person name="Read T.D."/>
            <person name="Myers G.S.A."/>
            <person name="Brunham R.C."/>
            <person name="Nelson W.C."/>
            <person name="Paulsen I.T."/>
            <person name="Heidelberg J.F."/>
            <person name="Holtzapple E.K."/>
            <person name="Khouri H.M."/>
            <person name="Federova N.B."/>
            <person name="Carty H.A."/>
            <person name="Umayam L.A."/>
            <person name="Haft D.H."/>
            <person name="Peterson J.D."/>
            <person name="Beanan M.J."/>
            <person name="White O."/>
            <person name="Salzberg S.L."/>
            <person name="Hsia R.-C."/>
            <person name="McClarty G."/>
            <person name="Rank R.G."/>
            <person name="Bavoil P.M."/>
            <person name="Fraser C.M."/>
        </authorList>
    </citation>
    <scope>NUCLEOTIDE SEQUENCE [LARGE SCALE GENOMIC DNA]</scope>
    <source>
        <strain>ATCC VR-813 / DSM 19441 / 03DC25 / GPIC</strain>
    </source>
</reference>
<proteinExistence type="inferred from homology"/>
<feature type="chain" id="PRO_0000157002" description="Thiamine-phosphate synthase">
    <location>
        <begin position="1"/>
        <end position="212"/>
    </location>
</feature>
<feature type="binding site" evidence="1">
    <location>
        <begin position="38"/>
        <end position="42"/>
    </location>
    <ligand>
        <name>4-amino-2-methyl-5-(diphosphooxymethyl)pyrimidine</name>
        <dbReference type="ChEBI" id="CHEBI:57841"/>
    </ligand>
</feature>
<feature type="binding site" evidence="1">
    <location>
        <position position="71"/>
    </location>
    <ligand>
        <name>Mg(2+)</name>
        <dbReference type="ChEBI" id="CHEBI:18420"/>
    </ligand>
</feature>
<feature type="binding site" evidence="1">
    <location>
        <position position="90"/>
    </location>
    <ligand>
        <name>Mg(2+)</name>
        <dbReference type="ChEBI" id="CHEBI:18420"/>
    </ligand>
</feature>
<feature type="binding site" evidence="1">
    <location>
        <position position="138"/>
    </location>
    <ligand>
        <name>4-amino-2-methyl-5-(diphosphooxymethyl)pyrimidine</name>
        <dbReference type="ChEBI" id="CHEBI:57841"/>
    </ligand>
</feature>
<feature type="binding site" evidence="1">
    <location>
        <position position="166"/>
    </location>
    <ligand>
        <name>2-[(2R,5Z)-2-carboxy-4-methylthiazol-5(2H)-ylidene]ethyl phosphate</name>
        <dbReference type="ChEBI" id="CHEBI:62899"/>
    </ligand>
</feature>
<name>THIE_CHLCV</name>
<sequence length="212" mass="22571">MEEDFFKLILITDRQNIPMEEYLDFVSACVQSGVTAVQLREKGLSHRELLSFGGALKSILDPLDIPLIVSDSVSVCLDLDASGVHLGQTDGDVIEARELLGPDKIIGWNVHTLDQLLNANTLPIDYLGLSALFATENKPEATDLWGFSGLEQAVSLCEHPIVAVGGIDESNAGNVVEAGAAGIAAIGAFHSAHNPGLATKALREIVDRGLRC</sequence>
<gene>
    <name evidence="1" type="primary">thiE</name>
    <name type="ordered locus">CCA_00203</name>
</gene>
<keyword id="KW-0460">Magnesium</keyword>
<keyword id="KW-0479">Metal-binding</keyword>
<keyword id="KW-0784">Thiamine biosynthesis</keyword>
<keyword id="KW-0808">Transferase</keyword>
<organism>
    <name type="scientific">Chlamydia caviae (strain ATCC VR-813 / DSM 19441 / 03DC25 / GPIC)</name>
    <name type="common">Chlamydophila caviae</name>
    <dbReference type="NCBI Taxonomy" id="227941"/>
    <lineage>
        <taxon>Bacteria</taxon>
        <taxon>Pseudomonadati</taxon>
        <taxon>Chlamydiota</taxon>
        <taxon>Chlamydiia</taxon>
        <taxon>Chlamydiales</taxon>
        <taxon>Chlamydiaceae</taxon>
        <taxon>Chlamydia/Chlamydophila group</taxon>
        <taxon>Chlamydia</taxon>
    </lineage>
</organism>
<dbReference type="EC" id="2.5.1.3" evidence="1"/>
<dbReference type="EMBL" id="AE015925">
    <property type="protein sequence ID" value="AAP04954.1"/>
    <property type="molecule type" value="Genomic_DNA"/>
</dbReference>
<dbReference type="RefSeq" id="WP_011006173.1">
    <property type="nucleotide sequence ID" value="NC_003361.3"/>
</dbReference>
<dbReference type="SMR" id="Q824E9"/>
<dbReference type="STRING" id="227941.CCA_00203"/>
<dbReference type="KEGG" id="cca:CCA_00203"/>
<dbReference type="eggNOG" id="COG0352">
    <property type="taxonomic scope" value="Bacteria"/>
</dbReference>
<dbReference type="HOGENOM" id="CLU_018272_3_2_0"/>
<dbReference type="OrthoDB" id="9812206at2"/>
<dbReference type="UniPathway" id="UPA00060">
    <property type="reaction ID" value="UER00141"/>
</dbReference>
<dbReference type="Proteomes" id="UP000002193">
    <property type="component" value="Chromosome"/>
</dbReference>
<dbReference type="GO" id="GO:0005737">
    <property type="term" value="C:cytoplasm"/>
    <property type="evidence" value="ECO:0007669"/>
    <property type="project" value="TreeGrafter"/>
</dbReference>
<dbReference type="GO" id="GO:0000287">
    <property type="term" value="F:magnesium ion binding"/>
    <property type="evidence" value="ECO:0007669"/>
    <property type="project" value="UniProtKB-UniRule"/>
</dbReference>
<dbReference type="GO" id="GO:0004789">
    <property type="term" value="F:thiamine-phosphate diphosphorylase activity"/>
    <property type="evidence" value="ECO:0007669"/>
    <property type="project" value="UniProtKB-UniRule"/>
</dbReference>
<dbReference type="GO" id="GO:0009228">
    <property type="term" value="P:thiamine biosynthetic process"/>
    <property type="evidence" value="ECO:0007669"/>
    <property type="project" value="UniProtKB-KW"/>
</dbReference>
<dbReference type="GO" id="GO:0009229">
    <property type="term" value="P:thiamine diphosphate biosynthetic process"/>
    <property type="evidence" value="ECO:0007669"/>
    <property type="project" value="UniProtKB-UniRule"/>
</dbReference>
<dbReference type="CDD" id="cd00564">
    <property type="entry name" value="TMP_TenI"/>
    <property type="match status" value="1"/>
</dbReference>
<dbReference type="Gene3D" id="3.20.20.70">
    <property type="entry name" value="Aldolase class I"/>
    <property type="match status" value="1"/>
</dbReference>
<dbReference type="HAMAP" id="MF_00097">
    <property type="entry name" value="TMP_synthase"/>
    <property type="match status" value="1"/>
</dbReference>
<dbReference type="InterPro" id="IPR013785">
    <property type="entry name" value="Aldolase_TIM"/>
</dbReference>
<dbReference type="InterPro" id="IPR036206">
    <property type="entry name" value="ThiamineP_synth_sf"/>
</dbReference>
<dbReference type="InterPro" id="IPR022998">
    <property type="entry name" value="ThiamineP_synth_TenI"/>
</dbReference>
<dbReference type="InterPro" id="IPR034291">
    <property type="entry name" value="TMP_synthase"/>
</dbReference>
<dbReference type="NCBIfam" id="TIGR00693">
    <property type="entry name" value="thiE"/>
    <property type="match status" value="1"/>
</dbReference>
<dbReference type="PANTHER" id="PTHR20857:SF23">
    <property type="entry name" value="THIAMINE BIOSYNTHETIC BIFUNCTIONAL ENZYME"/>
    <property type="match status" value="1"/>
</dbReference>
<dbReference type="PANTHER" id="PTHR20857">
    <property type="entry name" value="THIAMINE-PHOSPHATE PYROPHOSPHORYLASE"/>
    <property type="match status" value="1"/>
</dbReference>
<dbReference type="Pfam" id="PF02581">
    <property type="entry name" value="TMP-TENI"/>
    <property type="match status" value="1"/>
</dbReference>
<dbReference type="SUPFAM" id="SSF51391">
    <property type="entry name" value="Thiamin phosphate synthase"/>
    <property type="match status" value="1"/>
</dbReference>
<comment type="function">
    <text evidence="1">Condenses 4-methyl-5-(beta-hydroxyethyl)thiazole monophosphate (THZ-P) and 2-methyl-4-amino-5-hydroxymethyl pyrimidine pyrophosphate (HMP-PP) to form thiamine monophosphate (TMP).</text>
</comment>
<comment type="catalytic activity">
    <reaction evidence="1">
        <text>2-[(2R,5Z)-2-carboxy-4-methylthiazol-5(2H)-ylidene]ethyl phosphate + 4-amino-2-methyl-5-(diphosphooxymethyl)pyrimidine + 2 H(+) = thiamine phosphate + CO2 + diphosphate</text>
        <dbReference type="Rhea" id="RHEA:47844"/>
        <dbReference type="ChEBI" id="CHEBI:15378"/>
        <dbReference type="ChEBI" id="CHEBI:16526"/>
        <dbReference type="ChEBI" id="CHEBI:33019"/>
        <dbReference type="ChEBI" id="CHEBI:37575"/>
        <dbReference type="ChEBI" id="CHEBI:57841"/>
        <dbReference type="ChEBI" id="CHEBI:62899"/>
        <dbReference type="EC" id="2.5.1.3"/>
    </reaction>
</comment>
<comment type="catalytic activity">
    <reaction evidence="1">
        <text>2-(2-carboxy-4-methylthiazol-5-yl)ethyl phosphate + 4-amino-2-methyl-5-(diphosphooxymethyl)pyrimidine + 2 H(+) = thiamine phosphate + CO2 + diphosphate</text>
        <dbReference type="Rhea" id="RHEA:47848"/>
        <dbReference type="ChEBI" id="CHEBI:15378"/>
        <dbReference type="ChEBI" id="CHEBI:16526"/>
        <dbReference type="ChEBI" id="CHEBI:33019"/>
        <dbReference type="ChEBI" id="CHEBI:37575"/>
        <dbReference type="ChEBI" id="CHEBI:57841"/>
        <dbReference type="ChEBI" id="CHEBI:62890"/>
        <dbReference type="EC" id="2.5.1.3"/>
    </reaction>
</comment>
<comment type="catalytic activity">
    <reaction evidence="1">
        <text>4-methyl-5-(2-phosphooxyethyl)-thiazole + 4-amino-2-methyl-5-(diphosphooxymethyl)pyrimidine + H(+) = thiamine phosphate + diphosphate</text>
        <dbReference type="Rhea" id="RHEA:22328"/>
        <dbReference type="ChEBI" id="CHEBI:15378"/>
        <dbReference type="ChEBI" id="CHEBI:33019"/>
        <dbReference type="ChEBI" id="CHEBI:37575"/>
        <dbReference type="ChEBI" id="CHEBI:57841"/>
        <dbReference type="ChEBI" id="CHEBI:58296"/>
        <dbReference type="EC" id="2.5.1.3"/>
    </reaction>
</comment>
<comment type="cofactor">
    <cofactor evidence="1">
        <name>Mg(2+)</name>
        <dbReference type="ChEBI" id="CHEBI:18420"/>
    </cofactor>
    <text evidence="1">Binds 1 Mg(2+) ion per subunit.</text>
</comment>
<comment type="pathway">
    <text evidence="1">Cofactor biosynthesis; thiamine diphosphate biosynthesis; thiamine phosphate from 4-amino-2-methyl-5-diphosphomethylpyrimidine and 4-methyl-5-(2-phosphoethyl)-thiazole: step 1/1.</text>
</comment>
<comment type="similarity">
    <text evidence="1">Belongs to the thiamine-phosphate synthase family.</text>
</comment>
<protein>
    <recommendedName>
        <fullName evidence="1">Thiamine-phosphate synthase</fullName>
        <shortName evidence="1">TP synthase</shortName>
        <shortName evidence="1">TPS</shortName>
        <ecNumber evidence="1">2.5.1.3</ecNumber>
    </recommendedName>
    <alternativeName>
        <fullName evidence="1">Thiamine-phosphate pyrophosphorylase</fullName>
        <shortName evidence="1">TMP pyrophosphorylase</shortName>
        <shortName evidence="1">TMP-PPase</shortName>
    </alternativeName>
</protein>
<accession>Q824E9</accession>